<sequence>MTQVFQGRSFLAEKDFTRAELEYLIDFSAHLKDLKKRGVPHHYLEGKNIALLFEKTSTRTRAAFTTAAIDLGAHPEYLGANDIQLGKKESTEDTAKVLGRMFDGIEFRGFSQRMVEELAEFSGVPVWNGLTDEWHPTQMLADYLTVKENFGKLEGLTLVYCGDGRNNVANSLLVTGAILGVNVHIFSPKELFPEEEIVTLAEGYAKESGARILITEDADEAVKGADVLYTDVWVSMGEEDKFKERVELLQPYQVNMDLVQKAGNDKLIFLHCLPAFHDTNTVYGKDVAEKFGVKEMEVTDEVFRSKYARHFDQAENRMHTIKAVMAATLGNLFIPKV</sequence>
<dbReference type="EC" id="2.1.3.3"/>
<dbReference type="EMBL" id="AE009949">
    <property type="protein sequence ID" value="AAL98127.1"/>
    <property type="molecule type" value="Genomic_DNA"/>
</dbReference>
<dbReference type="SMR" id="P65610"/>
<dbReference type="KEGG" id="spm:spyM18_1562"/>
<dbReference type="HOGENOM" id="CLU_043846_3_1_9"/>
<dbReference type="UniPathway" id="UPA00254">
    <property type="reaction ID" value="UER00365"/>
</dbReference>
<dbReference type="GO" id="GO:0005737">
    <property type="term" value="C:cytoplasm"/>
    <property type="evidence" value="ECO:0007669"/>
    <property type="project" value="UniProtKB-SubCell"/>
</dbReference>
<dbReference type="GO" id="GO:0016597">
    <property type="term" value="F:amino acid binding"/>
    <property type="evidence" value="ECO:0007669"/>
    <property type="project" value="InterPro"/>
</dbReference>
<dbReference type="GO" id="GO:0004585">
    <property type="term" value="F:ornithine carbamoyltransferase activity"/>
    <property type="evidence" value="ECO:0007669"/>
    <property type="project" value="UniProtKB-UniRule"/>
</dbReference>
<dbReference type="GO" id="GO:0042450">
    <property type="term" value="P:arginine biosynthetic process via ornithine"/>
    <property type="evidence" value="ECO:0007669"/>
    <property type="project" value="TreeGrafter"/>
</dbReference>
<dbReference type="GO" id="GO:0019547">
    <property type="term" value="P:arginine catabolic process to ornithine"/>
    <property type="evidence" value="ECO:0007669"/>
    <property type="project" value="UniProtKB-UniRule"/>
</dbReference>
<dbReference type="GO" id="GO:0019240">
    <property type="term" value="P:citrulline biosynthetic process"/>
    <property type="evidence" value="ECO:0007669"/>
    <property type="project" value="TreeGrafter"/>
</dbReference>
<dbReference type="FunFam" id="3.40.50.1370:FF:000004">
    <property type="entry name" value="Ornithine carbamoyltransferase"/>
    <property type="match status" value="1"/>
</dbReference>
<dbReference type="Gene3D" id="3.40.50.1370">
    <property type="entry name" value="Aspartate/ornithine carbamoyltransferase"/>
    <property type="match status" value="2"/>
</dbReference>
<dbReference type="HAMAP" id="MF_01109">
    <property type="entry name" value="OTCase"/>
    <property type="match status" value="1"/>
</dbReference>
<dbReference type="InterPro" id="IPR006132">
    <property type="entry name" value="Asp/Orn_carbamoyltranf_P-bd"/>
</dbReference>
<dbReference type="InterPro" id="IPR006130">
    <property type="entry name" value="Asp/Orn_carbamoylTrfase"/>
</dbReference>
<dbReference type="InterPro" id="IPR036901">
    <property type="entry name" value="Asp/Orn_carbamoylTrfase_sf"/>
</dbReference>
<dbReference type="InterPro" id="IPR006131">
    <property type="entry name" value="Asp_carbamoyltransf_Asp/Orn-bd"/>
</dbReference>
<dbReference type="InterPro" id="IPR002292">
    <property type="entry name" value="Orn/put_carbamltrans"/>
</dbReference>
<dbReference type="InterPro" id="IPR024904">
    <property type="entry name" value="OTCase_ArgI"/>
</dbReference>
<dbReference type="NCBIfam" id="TIGR00658">
    <property type="entry name" value="orni_carb_tr"/>
    <property type="match status" value="1"/>
</dbReference>
<dbReference type="NCBIfam" id="NF001986">
    <property type="entry name" value="PRK00779.1"/>
    <property type="match status" value="1"/>
</dbReference>
<dbReference type="PANTHER" id="PTHR45753:SF1">
    <property type="entry name" value="ORNITHINE CARBAMOYLTRANSFERASE, CATABOLIC"/>
    <property type="match status" value="1"/>
</dbReference>
<dbReference type="PANTHER" id="PTHR45753">
    <property type="entry name" value="ORNITHINE CARBAMOYLTRANSFERASE, MITOCHONDRIAL"/>
    <property type="match status" value="1"/>
</dbReference>
<dbReference type="Pfam" id="PF00185">
    <property type="entry name" value="OTCace"/>
    <property type="match status" value="1"/>
</dbReference>
<dbReference type="Pfam" id="PF02729">
    <property type="entry name" value="OTCace_N"/>
    <property type="match status" value="1"/>
</dbReference>
<dbReference type="PRINTS" id="PR00100">
    <property type="entry name" value="AOTCASE"/>
</dbReference>
<dbReference type="PRINTS" id="PR00102">
    <property type="entry name" value="OTCASE"/>
</dbReference>
<dbReference type="SUPFAM" id="SSF53671">
    <property type="entry name" value="Aspartate/ornithine carbamoyltransferase"/>
    <property type="match status" value="1"/>
</dbReference>
<dbReference type="PROSITE" id="PS00097">
    <property type="entry name" value="CARBAMOYLTRANSFERASE"/>
    <property type="match status" value="1"/>
</dbReference>
<name>OTCC_STRP8</name>
<accession>P65610</accession>
<accession>Q8P052</accession>
<keyword id="KW-0056">Arginine metabolism</keyword>
<keyword id="KW-0963">Cytoplasm</keyword>
<keyword id="KW-0808">Transferase</keyword>
<organism>
    <name type="scientific">Streptococcus pyogenes serotype M18 (strain MGAS8232)</name>
    <dbReference type="NCBI Taxonomy" id="186103"/>
    <lineage>
        <taxon>Bacteria</taxon>
        <taxon>Bacillati</taxon>
        <taxon>Bacillota</taxon>
        <taxon>Bacilli</taxon>
        <taxon>Lactobacillales</taxon>
        <taxon>Streptococcaceae</taxon>
        <taxon>Streptococcus</taxon>
    </lineage>
</organism>
<evidence type="ECO:0000250" key="1"/>
<evidence type="ECO:0000255" key="2">
    <source>
        <dbReference type="HAMAP-Rule" id="MF_01109"/>
    </source>
</evidence>
<evidence type="ECO:0000305" key="3"/>
<gene>
    <name type="primary">arcB</name>
    <name type="ordered locus">spyM18_1562</name>
</gene>
<comment type="function">
    <text evidence="1">Reversibly catalyzes the transfer of the carbamoyl group from carbamoyl phosphate (CP) to the N(epsilon) atom of ornithine (ORN) to produce L-citrulline.</text>
</comment>
<comment type="catalytic activity">
    <reaction>
        <text>carbamoyl phosphate + L-ornithine = L-citrulline + phosphate + H(+)</text>
        <dbReference type="Rhea" id="RHEA:19513"/>
        <dbReference type="ChEBI" id="CHEBI:15378"/>
        <dbReference type="ChEBI" id="CHEBI:43474"/>
        <dbReference type="ChEBI" id="CHEBI:46911"/>
        <dbReference type="ChEBI" id="CHEBI:57743"/>
        <dbReference type="ChEBI" id="CHEBI:58228"/>
        <dbReference type="EC" id="2.1.3.3"/>
    </reaction>
</comment>
<comment type="pathway">
    <text>Amino-acid degradation; L-arginine degradation via ADI pathway; carbamoyl phosphate from L-arginine: step 2/2.</text>
</comment>
<comment type="subcellular location">
    <subcellularLocation>
        <location evidence="1">Cytoplasm</location>
    </subcellularLocation>
</comment>
<comment type="similarity">
    <text evidence="3">Belongs to the aspartate/ornithine carbamoyltransferase superfamily. OTCase family.</text>
</comment>
<feature type="initiator methionine" description="Removed" evidence="1">
    <location>
        <position position="1"/>
    </location>
</feature>
<feature type="chain" id="PRO_0000113041" description="Ornithine carbamoyltransferase, catabolic">
    <location>
        <begin position="2"/>
        <end position="337"/>
    </location>
</feature>
<feature type="binding site" evidence="2">
    <location>
        <begin position="57"/>
        <end position="60"/>
    </location>
    <ligand>
        <name>carbamoyl phosphate</name>
        <dbReference type="ChEBI" id="CHEBI:58228"/>
    </ligand>
</feature>
<feature type="binding site" evidence="2">
    <location>
        <position position="84"/>
    </location>
    <ligand>
        <name>carbamoyl phosphate</name>
        <dbReference type="ChEBI" id="CHEBI:58228"/>
    </ligand>
</feature>
<feature type="binding site" evidence="2">
    <location>
        <position position="108"/>
    </location>
    <ligand>
        <name>carbamoyl phosphate</name>
        <dbReference type="ChEBI" id="CHEBI:58228"/>
    </ligand>
</feature>
<feature type="binding site" evidence="2">
    <location>
        <begin position="135"/>
        <end position="138"/>
    </location>
    <ligand>
        <name>carbamoyl phosphate</name>
        <dbReference type="ChEBI" id="CHEBI:58228"/>
    </ligand>
</feature>
<feature type="binding site" evidence="2">
    <location>
        <position position="167"/>
    </location>
    <ligand>
        <name>L-ornithine</name>
        <dbReference type="ChEBI" id="CHEBI:46911"/>
    </ligand>
</feature>
<feature type="binding site" evidence="2">
    <location>
        <position position="231"/>
    </location>
    <ligand>
        <name>L-ornithine</name>
        <dbReference type="ChEBI" id="CHEBI:46911"/>
    </ligand>
</feature>
<feature type="binding site" evidence="2">
    <location>
        <begin position="235"/>
        <end position="236"/>
    </location>
    <ligand>
        <name>L-ornithine</name>
        <dbReference type="ChEBI" id="CHEBI:46911"/>
    </ligand>
</feature>
<feature type="binding site" evidence="2">
    <location>
        <begin position="272"/>
        <end position="273"/>
    </location>
    <ligand>
        <name>carbamoyl phosphate</name>
        <dbReference type="ChEBI" id="CHEBI:58228"/>
    </ligand>
</feature>
<feature type="binding site" evidence="2">
    <location>
        <position position="317"/>
    </location>
    <ligand>
        <name>carbamoyl phosphate</name>
        <dbReference type="ChEBI" id="CHEBI:58228"/>
    </ligand>
</feature>
<proteinExistence type="inferred from homology"/>
<protein>
    <recommendedName>
        <fullName>Ornithine carbamoyltransferase, catabolic</fullName>
        <shortName>OTCase</shortName>
        <ecNumber>2.1.3.3</ecNumber>
    </recommendedName>
</protein>
<reference key="1">
    <citation type="journal article" date="2002" name="Proc. Natl. Acad. Sci. U.S.A.">
        <title>Genome sequence and comparative microarray analysis of serotype M18 group A Streptococcus strains associated with acute rheumatic fever outbreaks.</title>
        <authorList>
            <person name="Smoot J.C."/>
            <person name="Barbian K.D."/>
            <person name="Van Gompel J.J."/>
            <person name="Smoot L.M."/>
            <person name="Chaussee M.S."/>
            <person name="Sylva G.L."/>
            <person name="Sturdevant D.E."/>
            <person name="Ricklefs S.M."/>
            <person name="Porcella S.F."/>
            <person name="Parkins L.D."/>
            <person name="Beres S.B."/>
            <person name="Campbell D.S."/>
            <person name="Smith T.M."/>
            <person name="Zhang Q."/>
            <person name="Kapur V."/>
            <person name="Daly J.A."/>
            <person name="Veasy L.G."/>
            <person name="Musser J.M."/>
        </authorList>
    </citation>
    <scope>NUCLEOTIDE SEQUENCE [LARGE SCALE GENOMIC DNA]</scope>
    <source>
        <strain>MGAS8232</strain>
    </source>
</reference>